<accession>Q60FX9</accession>
<name>CCNB2_ANGJA</name>
<keyword id="KW-0131">Cell cycle</keyword>
<keyword id="KW-0132">Cell division</keyword>
<keyword id="KW-0195">Cyclin</keyword>
<keyword id="KW-0498">Mitosis</keyword>
<protein>
    <recommendedName>
        <fullName>G2/mitotic-specific cyclin-B2</fullName>
    </recommendedName>
</protein>
<gene>
    <name type="primary">ccnb2</name>
</gene>
<comment type="function">
    <text evidence="1">Essential for the control of the cell cycle at the G2/M (mitosis) transition.</text>
</comment>
<comment type="subunit">
    <text evidence="1">Interacts with the CDK1 protein kinase to form a serine/threonine kinase holoenzyme complex also known as maturation promoting factor (MPF). The cyclin subunit imparts substrate specificity to the complex (By similarity).</text>
</comment>
<comment type="similarity">
    <text evidence="2">Belongs to the cyclin family. Cyclin AB subfamily.</text>
</comment>
<reference key="1">
    <citation type="journal article" date="2004" name="Biochem. Biophys. Res. Commun.">
        <title>The cloning of cyclin B3 and its gene expression during hormonally induced spermatogenesis in the teleost, Anguilla japonica.</title>
        <authorList>
            <person name="Kajiura-Kobayashi H."/>
            <person name="Kobayashi T."/>
            <person name="Nagahama Y."/>
        </authorList>
    </citation>
    <scope>NUCLEOTIDE SEQUENCE [MRNA]</scope>
</reference>
<feature type="chain" id="PRO_0000080365" description="G2/mitotic-specific cyclin-B2">
    <location>
        <begin position="1"/>
        <end position="394"/>
    </location>
</feature>
<sequence length="394" mass="44388">MSLAVRGINRNAENAAPMGKAITDGTRRPVLGEISNFANKAVQVKKNTTLKAQAVKTAKPASQQQTLPTAALHKRAPVLPVIADPPQVVSVSTDVAIKEEELCQAFSDALLAVEDIDEGDADMPQLCSEYVKDIYVYLRNLEVQQCIRPRYMQGYEINERMRALLVDWLIQVHSRFQLLQETLYMTVAILDRFLQVQPVSRRKLQLVGVTAMLVASKYEEMYAPEVGDFVYITDNAFTKAQIREMEMLILRDLNFQLGRPLPLHFLRRASKAGSADAEKHTLAKYLMELTLMDYDMLHYHPSEIAAAALCLSQLVLDGQKWSATQQHYSTYNEDHLKPIMQHMAKNVVRVNEGLTKHMAIKNKYASSRLMRISLLPQLKAAVIKDLAAPLLPQS</sequence>
<evidence type="ECO:0000250" key="1"/>
<evidence type="ECO:0000305" key="2"/>
<organism>
    <name type="scientific">Anguilla japonica</name>
    <name type="common">Japanese eel</name>
    <dbReference type="NCBI Taxonomy" id="7937"/>
    <lineage>
        <taxon>Eukaryota</taxon>
        <taxon>Metazoa</taxon>
        <taxon>Chordata</taxon>
        <taxon>Craniata</taxon>
        <taxon>Vertebrata</taxon>
        <taxon>Euteleostomi</taxon>
        <taxon>Actinopterygii</taxon>
        <taxon>Neopterygii</taxon>
        <taxon>Teleostei</taxon>
        <taxon>Anguilliformes</taxon>
        <taxon>Anguillidae</taxon>
        <taxon>Anguilla</taxon>
    </lineage>
</organism>
<proteinExistence type="evidence at transcript level"/>
<dbReference type="EMBL" id="AB183432">
    <property type="protein sequence ID" value="BAD52077.1"/>
    <property type="molecule type" value="mRNA"/>
</dbReference>
<dbReference type="SMR" id="Q60FX9"/>
<dbReference type="GO" id="GO:0016538">
    <property type="term" value="F:cyclin-dependent protein serine/threonine kinase regulator activity"/>
    <property type="evidence" value="ECO:0007669"/>
    <property type="project" value="InterPro"/>
</dbReference>
<dbReference type="GO" id="GO:0051301">
    <property type="term" value="P:cell division"/>
    <property type="evidence" value="ECO:0007669"/>
    <property type="project" value="UniProtKB-KW"/>
</dbReference>
<dbReference type="GO" id="GO:0044772">
    <property type="term" value="P:mitotic cell cycle phase transition"/>
    <property type="evidence" value="ECO:0007669"/>
    <property type="project" value="InterPro"/>
</dbReference>
<dbReference type="CDD" id="cd20566">
    <property type="entry name" value="CYCLIN_CCNB2_rpt1"/>
    <property type="match status" value="1"/>
</dbReference>
<dbReference type="CDD" id="cd20570">
    <property type="entry name" value="CYCLIN_CCNB2_rpt2"/>
    <property type="match status" value="1"/>
</dbReference>
<dbReference type="FunFam" id="1.10.472.10:FF:000027">
    <property type="entry name" value="G2/mitotic-specific cyclin-B1"/>
    <property type="match status" value="1"/>
</dbReference>
<dbReference type="Gene3D" id="1.10.472.10">
    <property type="entry name" value="Cyclin-like"/>
    <property type="match status" value="2"/>
</dbReference>
<dbReference type="InterPro" id="IPR039361">
    <property type="entry name" value="Cyclin"/>
</dbReference>
<dbReference type="InterPro" id="IPR013763">
    <property type="entry name" value="Cyclin-like_dom"/>
</dbReference>
<dbReference type="InterPro" id="IPR036915">
    <property type="entry name" value="Cyclin-like_sf"/>
</dbReference>
<dbReference type="InterPro" id="IPR046965">
    <property type="entry name" value="Cyclin_A/B-like"/>
</dbReference>
<dbReference type="InterPro" id="IPR004367">
    <property type="entry name" value="Cyclin_C-dom"/>
</dbReference>
<dbReference type="InterPro" id="IPR006671">
    <property type="entry name" value="Cyclin_N"/>
</dbReference>
<dbReference type="InterPro" id="IPR048258">
    <property type="entry name" value="Cyclins_cyclin-box"/>
</dbReference>
<dbReference type="PANTHER" id="PTHR10177">
    <property type="entry name" value="CYCLINS"/>
    <property type="match status" value="1"/>
</dbReference>
<dbReference type="Pfam" id="PF02984">
    <property type="entry name" value="Cyclin_C"/>
    <property type="match status" value="1"/>
</dbReference>
<dbReference type="Pfam" id="PF00134">
    <property type="entry name" value="Cyclin_N"/>
    <property type="match status" value="1"/>
</dbReference>
<dbReference type="PIRSF" id="PIRSF001771">
    <property type="entry name" value="Cyclin_A_B_D_E"/>
    <property type="match status" value="1"/>
</dbReference>
<dbReference type="SMART" id="SM00385">
    <property type="entry name" value="CYCLIN"/>
    <property type="match status" value="2"/>
</dbReference>
<dbReference type="SMART" id="SM01332">
    <property type="entry name" value="Cyclin_C"/>
    <property type="match status" value="1"/>
</dbReference>
<dbReference type="SUPFAM" id="SSF47954">
    <property type="entry name" value="Cyclin-like"/>
    <property type="match status" value="2"/>
</dbReference>
<dbReference type="PROSITE" id="PS00292">
    <property type="entry name" value="CYCLINS"/>
    <property type="match status" value="1"/>
</dbReference>